<feature type="chain" id="PRO_0000206000" description="Ethanolamine ammonia-lyase small subunit">
    <location>
        <begin position="1"/>
        <end position="270"/>
    </location>
</feature>
<feature type="binding site" evidence="1">
    <location>
        <position position="166"/>
    </location>
    <ligand>
        <name>adenosylcob(III)alamin</name>
        <dbReference type="ChEBI" id="CHEBI:18408"/>
    </ligand>
</feature>
<feature type="binding site" evidence="1">
    <location>
        <position position="187"/>
    </location>
    <ligand>
        <name>adenosylcob(III)alamin</name>
        <dbReference type="ChEBI" id="CHEBI:18408"/>
    </ligand>
</feature>
<feature type="binding site" evidence="1">
    <location>
        <position position="216"/>
    </location>
    <ligand>
        <name>adenosylcob(III)alamin</name>
        <dbReference type="ChEBI" id="CHEBI:18408"/>
    </ligand>
</feature>
<comment type="function">
    <text evidence="1">Catalyzes the deamination of various vicinal amino-alcohols to oxo compounds. Allows this organism to utilize ethanolamine as the sole source of nitrogen and carbon in the presence of external vitamin B12.</text>
</comment>
<comment type="catalytic activity">
    <reaction evidence="1">
        <text>ethanolamine = acetaldehyde + NH4(+)</text>
        <dbReference type="Rhea" id="RHEA:15313"/>
        <dbReference type="ChEBI" id="CHEBI:15343"/>
        <dbReference type="ChEBI" id="CHEBI:28938"/>
        <dbReference type="ChEBI" id="CHEBI:57603"/>
        <dbReference type="EC" id="4.3.1.7"/>
    </reaction>
</comment>
<comment type="cofactor">
    <cofactor evidence="1">
        <name>adenosylcob(III)alamin</name>
        <dbReference type="ChEBI" id="CHEBI:18408"/>
    </cofactor>
    <text evidence="1">Binds between the large and small subunits.</text>
</comment>
<comment type="pathway">
    <text evidence="1">Amine and polyamine degradation; ethanolamine degradation.</text>
</comment>
<comment type="subunit">
    <text evidence="1">The basic unit is a heterodimer which dimerizes to form tetramers. The heterotetramers trimerize; 6 large subunits form a core ring with 6 small subunits projecting outwards.</text>
</comment>
<comment type="subcellular location">
    <subcellularLocation>
        <location evidence="1">Bacterial microcompartment</location>
    </subcellularLocation>
</comment>
<comment type="similarity">
    <text evidence="1">Belongs to the EutC family.</text>
</comment>
<keyword id="KW-1283">Bacterial microcompartment</keyword>
<keyword id="KW-0846">Cobalamin</keyword>
<keyword id="KW-0170">Cobalt</keyword>
<keyword id="KW-0456">Lyase</keyword>
<keyword id="KW-1185">Reference proteome</keyword>
<dbReference type="EC" id="4.3.1.7" evidence="1"/>
<dbReference type="EMBL" id="AL646052">
    <property type="protein sequence ID" value="CAD16835.1"/>
    <property type="molecule type" value="Genomic_DNA"/>
</dbReference>
<dbReference type="RefSeq" id="WP_011003016.1">
    <property type="nucleotide sequence ID" value="NC_003295.1"/>
</dbReference>
<dbReference type="SMR" id="Q8XUR0"/>
<dbReference type="STRING" id="267608.RSc3126"/>
<dbReference type="EnsemblBacteria" id="CAD16835">
    <property type="protein sequence ID" value="CAD16835"/>
    <property type="gene ID" value="RSc3126"/>
</dbReference>
<dbReference type="KEGG" id="rso:RSc3126"/>
<dbReference type="PATRIC" id="fig|267608.8.peg.3189"/>
<dbReference type="eggNOG" id="COG4302">
    <property type="taxonomic scope" value="Bacteria"/>
</dbReference>
<dbReference type="HOGENOM" id="CLU_068224_1_0_4"/>
<dbReference type="UniPathway" id="UPA00560"/>
<dbReference type="Proteomes" id="UP000001436">
    <property type="component" value="Chromosome"/>
</dbReference>
<dbReference type="GO" id="GO:0009350">
    <property type="term" value="C:ethanolamine ammonia-lyase complex"/>
    <property type="evidence" value="ECO:0007669"/>
    <property type="project" value="UniProtKB-UniRule"/>
</dbReference>
<dbReference type="GO" id="GO:0031471">
    <property type="term" value="C:ethanolamine degradation polyhedral organelle"/>
    <property type="evidence" value="ECO:0007669"/>
    <property type="project" value="UniProtKB-UniRule"/>
</dbReference>
<dbReference type="GO" id="GO:0031419">
    <property type="term" value="F:cobalamin binding"/>
    <property type="evidence" value="ECO:0007669"/>
    <property type="project" value="UniProtKB-UniRule"/>
</dbReference>
<dbReference type="GO" id="GO:0008851">
    <property type="term" value="F:ethanolamine ammonia-lyase activity"/>
    <property type="evidence" value="ECO:0007669"/>
    <property type="project" value="UniProtKB-UniRule"/>
</dbReference>
<dbReference type="GO" id="GO:0006520">
    <property type="term" value="P:amino acid metabolic process"/>
    <property type="evidence" value="ECO:0007669"/>
    <property type="project" value="InterPro"/>
</dbReference>
<dbReference type="GO" id="GO:0046336">
    <property type="term" value="P:ethanolamine catabolic process"/>
    <property type="evidence" value="ECO:0007669"/>
    <property type="project" value="UniProtKB-UniRule"/>
</dbReference>
<dbReference type="Gene3D" id="3.40.50.11240">
    <property type="entry name" value="Ethanolamine ammonia-lyase light chain (EutC)"/>
    <property type="match status" value="1"/>
</dbReference>
<dbReference type="Gene3D" id="1.10.30.40">
    <property type="entry name" value="Ethanolamine ammonia-lyase light chain (EutC), N-terminal domain"/>
    <property type="match status" value="1"/>
</dbReference>
<dbReference type="HAMAP" id="MF_00601">
    <property type="entry name" value="EutC"/>
    <property type="match status" value="1"/>
</dbReference>
<dbReference type="InterPro" id="IPR009246">
    <property type="entry name" value="EutC"/>
</dbReference>
<dbReference type="InterPro" id="IPR042251">
    <property type="entry name" value="EutC_C"/>
</dbReference>
<dbReference type="InterPro" id="IPR042255">
    <property type="entry name" value="EutC_N"/>
</dbReference>
<dbReference type="NCBIfam" id="NF003971">
    <property type="entry name" value="PRK05465.1"/>
    <property type="match status" value="1"/>
</dbReference>
<dbReference type="PANTHER" id="PTHR39330">
    <property type="entry name" value="ETHANOLAMINE AMMONIA-LYASE LIGHT CHAIN"/>
    <property type="match status" value="1"/>
</dbReference>
<dbReference type="PANTHER" id="PTHR39330:SF1">
    <property type="entry name" value="ETHANOLAMINE AMMONIA-LYASE SMALL SUBUNIT"/>
    <property type="match status" value="1"/>
</dbReference>
<dbReference type="Pfam" id="PF05985">
    <property type="entry name" value="EutC"/>
    <property type="match status" value="1"/>
</dbReference>
<dbReference type="PIRSF" id="PIRSF018982">
    <property type="entry name" value="EutC"/>
    <property type="match status" value="1"/>
</dbReference>
<reference key="1">
    <citation type="journal article" date="2002" name="Nature">
        <title>Genome sequence of the plant pathogen Ralstonia solanacearum.</title>
        <authorList>
            <person name="Salanoubat M."/>
            <person name="Genin S."/>
            <person name="Artiguenave F."/>
            <person name="Gouzy J."/>
            <person name="Mangenot S."/>
            <person name="Arlat M."/>
            <person name="Billault A."/>
            <person name="Brottier P."/>
            <person name="Camus J.-C."/>
            <person name="Cattolico L."/>
            <person name="Chandler M."/>
            <person name="Choisne N."/>
            <person name="Claudel-Renard C."/>
            <person name="Cunnac S."/>
            <person name="Demange N."/>
            <person name="Gaspin C."/>
            <person name="Lavie M."/>
            <person name="Moisan A."/>
            <person name="Robert C."/>
            <person name="Saurin W."/>
            <person name="Schiex T."/>
            <person name="Siguier P."/>
            <person name="Thebault P."/>
            <person name="Whalen M."/>
            <person name="Wincker P."/>
            <person name="Levy M."/>
            <person name="Weissenbach J."/>
            <person name="Boucher C.A."/>
        </authorList>
    </citation>
    <scope>NUCLEOTIDE SEQUENCE [LARGE SCALE GENOMIC DNA]</scope>
    <source>
        <strain>ATCC BAA-1114 / GMI1000</strain>
    </source>
</reference>
<sequence>MTDERDDTPATVTQNPWQALRRLTPARIALGRAGVSLPTRPQLAFQAAHAQARDAVHLPFDPAALQAQLHAQGHATLLLHSAARDRDQYLQRPDLGRQLDAPSAQLLGDHAAAHPGGVDIALVVADGLSALAVHRHAAPLIAGVAEGVRAQGWSMAPIALVEQGRVAVADEVGERLGARMVVILIGERPGLSSPDSLGLYFTYAPRVGLTDAARNCISNVRPEGLGYAAAAHKLLYLMREAWRRQGSGVLLKEAAEVPLLEAGRRNFLLD</sequence>
<name>EUTC_RALN1</name>
<evidence type="ECO:0000255" key="1">
    <source>
        <dbReference type="HAMAP-Rule" id="MF_00601"/>
    </source>
</evidence>
<gene>
    <name evidence="1" type="primary">eutC</name>
    <name type="ordered locus">RSc3126</name>
    <name type="ORF">RS00477</name>
</gene>
<organism>
    <name type="scientific">Ralstonia nicotianae (strain ATCC BAA-1114 / GMI1000)</name>
    <name type="common">Ralstonia solanacearum</name>
    <dbReference type="NCBI Taxonomy" id="267608"/>
    <lineage>
        <taxon>Bacteria</taxon>
        <taxon>Pseudomonadati</taxon>
        <taxon>Pseudomonadota</taxon>
        <taxon>Betaproteobacteria</taxon>
        <taxon>Burkholderiales</taxon>
        <taxon>Burkholderiaceae</taxon>
        <taxon>Ralstonia</taxon>
        <taxon>Ralstonia solanacearum species complex</taxon>
    </lineage>
</organism>
<protein>
    <recommendedName>
        <fullName evidence="1">Ethanolamine ammonia-lyase small subunit</fullName>
        <shortName evidence="1">EAL small subunit</shortName>
        <ecNumber evidence="1">4.3.1.7</ecNumber>
    </recommendedName>
</protein>
<accession>Q8XUR0</accession>
<proteinExistence type="inferred from homology"/>